<proteinExistence type="inferred from homology"/>
<keyword id="KW-0131">Cell cycle</keyword>
<keyword id="KW-0132">Cell division</keyword>
<keyword id="KW-0143">Chaperone</keyword>
<keyword id="KW-0963">Cytoplasm</keyword>
<keyword id="KW-0413">Isomerase</keyword>
<keyword id="KW-1185">Reference proteome</keyword>
<keyword id="KW-0697">Rotamase</keyword>
<evidence type="ECO:0000250" key="1"/>
<evidence type="ECO:0000305" key="2"/>
<reference key="1">
    <citation type="journal article" date="2000" name="Nature">
        <title>The complete sequence of the mucosal pathogen Ureaplasma urealyticum.</title>
        <authorList>
            <person name="Glass J.I."/>
            <person name="Lefkowitz E.J."/>
            <person name="Glass J.S."/>
            <person name="Heiner C.R."/>
            <person name="Chen E.Y."/>
            <person name="Cassell G.H."/>
        </authorList>
    </citation>
    <scope>NUCLEOTIDE SEQUENCE [LARGE SCALE GENOMIC DNA]</scope>
    <source>
        <strain>ATCC 700970</strain>
    </source>
</reference>
<protein>
    <recommendedName>
        <fullName>Trigger factor</fullName>
        <shortName>TF</shortName>
        <ecNumber>5.2.1.8</ecNumber>
    </recommendedName>
    <alternativeName>
        <fullName>PPIase</fullName>
    </alternativeName>
</protein>
<sequence>MKLLNKIKNENAIEFQILIEKSEWEKKHKESFEKIAKKTASKLKIPGFRPGKVPVEEAKKHVNEIEVFETTTNDLIPQVLTFLEQDESFINDDSETVDTPSVDILDFKDGELSLKVVYDLYPVATIESYNDLILTPIVNEAFEHEVNAEIEHALNSKSQRRVKDDNEFIEKGDEVRFDFKGMIDSVPFEGGSAKDHLLTIGSNQFIPGFEDQMIGLKKDERKNINVKFPDDYHATDLAGKAAVFEVFIKEITNVKPQELNDEFAKSFNLPNVNTVQELKDYIHNQIVLAKQEKNSERAWLEIAQQLLAKAKITPIPQSLIDREVSTLRQQVLSQLSQYKIELKQYLEFSKKSEAQFQEDLIRQAKETITLALLVDDIAETQNIVVSDEEVKERVAEMAKLYQGEEQAVIEQLSKNPDAVKEFLLHKKVVNYLIDLNKNNQPKNTTLSSK</sequence>
<accession>Q9PQE4</accession>
<comment type="function">
    <text evidence="1">Involved in protein export. Acts as a chaperone by maintaining the newly synthesized protein in an open conformation. Functions as a peptidyl-prolyl cis-trans isomerase (By similarity).</text>
</comment>
<comment type="catalytic activity">
    <reaction>
        <text>[protein]-peptidylproline (omega=180) = [protein]-peptidylproline (omega=0)</text>
        <dbReference type="Rhea" id="RHEA:16237"/>
        <dbReference type="Rhea" id="RHEA-COMP:10747"/>
        <dbReference type="Rhea" id="RHEA-COMP:10748"/>
        <dbReference type="ChEBI" id="CHEBI:83833"/>
        <dbReference type="ChEBI" id="CHEBI:83834"/>
        <dbReference type="EC" id="5.2.1.8"/>
    </reaction>
</comment>
<comment type="subcellular location">
    <subcellularLocation>
        <location>Cytoplasm</location>
    </subcellularLocation>
    <text evidence="1">About half TF is bound to the ribosome near the polypeptide exit tunnel while the other half is free in the cytoplasm.</text>
</comment>
<comment type="domain">
    <text evidence="1">Consists of 3 domains; the N-terminus binds the ribosome, the middle domain has PPIase activity, while the C-terminus has intrinsic chaperone activity on its own.</text>
</comment>
<comment type="similarity">
    <text evidence="2">Belongs to the FKBP-type PPIase family. Tig subfamily.</text>
</comment>
<feature type="chain" id="PRO_0000179456" description="Trigger factor">
    <location>
        <begin position="1"/>
        <end position="449"/>
    </location>
</feature>
<feature type="domain" description="PPIase FKBP-type">
    <location>
        <begin position="172"/>
        <end position="257"/>
    </location>
</feature>
<name>TIG_UREPA</name>
<gene>
    <name type="primary">tig</name>
    <name type="ordered locus">UU347</name>
</gene>
<dbReference type="EC" id="5.2.1.8"/>
<dbReference type="EMBL" id="AF222894">
    <property type="protein sequence ID" value="AAF30756.1"/>
    <property type="molecule type" value="Genomic_DNA"/>
</dbReference>
<dbReference type="RefSeq" id="WP_006689135.1">
    <property type="nucleotide sequence ID" value="NC_002162.1"/>
</dbReference>
<dbReference type="SMR" id="Q9PQE4"/>
<dbReference type="STRING" id="273119.UU347"/>
<dbReference type="EnsemblBacteria" id="AAF30756">
    <property type="protein sequence ID" value="AAF30756"/>
    <property type="gene ID" value="UU347"/>
</dbReference>
<dbReference type="GeneID" id="29672387"/>
<dbReference type="KEGG" id="uur:UU347"/>
<dbReference type="eggNOG" id="COG0544">
    <property type="taxonomic scope" value="Bacteria"/>
</dbReference>
<dbReference type="HOGENOM" id="CLU_033058_3_2_14"/>
<dbReference type="OrthoDB" id="9767721at2"/>
<dbReference type="Proteomes" id="UP000000423">
    <property type="component" value="Chromosome"/>
</dbReference>
<dbReference type="GO" id="GO:0005737">
    <property type="term" value="C:cytoplasm"/>
    <property type="evidence" value="ECO:0007669"/>
    <property type="project" value="UniProtKB-SubCell"/>
</dbReference>
<dbReference type="GO" id="GO:0003755">
    <property type="term" value="F:peptidyl-prolyl cis-trans isomerase activity"/>
    <property type="evidence" value="ECO:0007669"/>
    <property type="project" value="UniProtKB-UniRule"/>
</dbReference>
<dbReference type="GO" id="GO:0044183">
    <property type="term" value="F:protein folding chaperone"/>
    <property type="evidence" value="ECO:0007669"/>
    <property type="project" value="TreeGrafter"/>
</dbReference>
<dbReference type="GO" id="GO:0043022">
    <property type="term" value="F:ribosome binding"/>
    <property type="evidence" value="ECO:0007669"/>
    <property type="project" value="TreeGrafter"/>
</dbReference>
<dbReference type="GO" id="GO:0051083">
    <property type="term" value="P:'de novo' cotranslational protein folding"/>
    <property type="evidence" value="ECO:0007669"/>
    <property type="project" value="TreeGrafter"/>
</dbReference>
<dbReference type="GO" id="GO:0051301">
    <property type="term" value="P:cell division"/>
    <property type="evidence" value="ECO:0007669"/>
    <property type="project" value="UniProtKB-KW"/>
</dbReference>
<dbReference type="GO" id="GO:0061077">
    <property type="term" value="P:chaperone-mediated protein folding"/>
    <property type="evidence" value="ECO:0007669"/>
    <property type="project" value="TreeGrafter"/>
</dbReference>
<dbReference type="GO" id="GO:0015031">
    <property type="term" value="P:protein transport"/>
    <property type="evidence" value="ECO:0007669"/>
    <property type="project" value="UniProtKB-UniRule"/>
</dbReference>
<dbReference type="GO" id="GO:0043335">
    <property type="term" value="P:protein unfolding"/>
    <property type="evidence" value="ECO:0007669"/>
    <property type="project" value="TreeGrafter"/>
</dbReference>
<dbReference type="FunFam" id="3.10.50.40:FF:000001">
    <property type="entry name" value="Trigger factor"/>
    <property type="match status" value="1"/>
</dbReference>
<dbReference type="Gene3D" id="3.10.50.40">
    <property type="match status" value="1"/>
</dbReference>
<dbReference type="Gene3D" id="3.30.70.1050">
    <property type="entry name" value="Trigger factor ribosome-binding domain"/>
    <property type="match status" value="1"/>
</dbReference>
<dbReference type="Gene3D" id="1.10.3120.10">
    <property type="entry name" value="Trigger factor, C-terminal domain"/>
    <property type="match status" value="1"/>
</dbReference>
<dbReference type="HAMAP" id="MF_00303">
    <property type="entry name" value="Trigger_factor_Tig"/>
    <property type="match status" value="1"/>
</dbReference>
<dbReference type="InterPro" id="IPR046357">
    <property type="entry name" value="PPIase_dom_sf"/>
</dbReference>
<dbReference type="InterPro" id="IPR001179">
    <property type="entry name" value="PPIase_FKBP_dom"/>
</dbReference>
<dbReference type="InterPro" id="IPR005215">
    <property type="entry name" value="Trig_fac"/>
</dbReference>
<dbReference type="InterPro" id="IPR008880">
    <property type="entry name" value="Trigger_fac_C"/>
</dbReference>
<dbReference type="InterPro" id="IPR037041">
    <property type="entry name" value="Trigger_fac_C_sf"/>
</dbReference>
<dbReference type="InterPro" id="IPR008881">
    <property type="entry name" value="Trigger_fac_ribosome-bd_bac"/>
</dbReference>
<dbReference type="InterPro" id="IPR036611">
    <property type="entry name" value="Trigger_fac_ribosome-bd_sf"/>
</dbReference>
<dbReference type="InterPro" id="IPR027304">
    <property type="entry name" value="Trigger_fact/SurA_dom_sf"/>
</dbReference>
<dbReference type="NCBIfam" id="TIGR00115">
    <property type="entry name" value="tig"/>
    <property type="match status" value="1"/>
</dbReference>
<dbReference type="PANTHER" id="PTHR30560">
    <property type="entry name" value="TRIGGER FACTOR CHAPERONE AND PEPTIDYL-PROLYL CIS/TRANS ISOMERASE"/>
    <property type="match status" value="1"/>
</dbReference>
<dbReference type="PANTHER" id="PTHR30560:SF3">
    <property type="entry name" value="TRIGGER FACTOR-LIKE PROTEIN TIG, CHLOROPLASTIC"/>
    <property type="match status" value="1"/>
</dbReference>
<dbReference type="Pfam" id="PF00254">
    <property type="entry name" value="FKBP_C"/>
    <property type="match status" value="1"/>
</dbReference>
<dbReference type="Pfam" id="PF05698">
    <property type="entry name" value="Trigger_C"/>
    <property type="match status" value="1"/>
</dbReference>
<dbReference type="Pfam" id="PF05697">
    <property type="entry name" value="Trigger_N"/>
    <property type="match status" value="1"/>
</dbReference>
<dbReference type="PIRSF" id="PIRSF003095">
    <property type="entry name" value="Trigger_factor"/>
    <property type="match status" value="1"/>
</dbReference>
<dbReference type="SUPFAM" id="SSF54534">
    <property type="entry name" value="FKBP-like"/>
    <property type="match status" value="1"/>
</dbReference>
<dbReference type="SUPFAM" id="SSF109998">
    <property type="entry name" value="Triger factor/SurA peptide-binding domain-like"/>
    <property type="match status" value="1"/>
</dbReference>
<dbReference type="SUPFAM" id="SSF102735">
    <property type="entry name" value="Trigger factor ribosome-binding domain"/>
    <property type="match status" value="1"/>
</dbReference>
<dbReference type="PROSITE" id="PS50059">
    <property type="entry name" value="FKBP_PPIASE"/>
    <property type="match status" value="1"/>
</dbReference>
<organism>
    <name type="scientific">Ureaplasma parvum serovar 3 (strain ATCC 700970)</name>
    <dbReference type="NCBI Taxonomy" id="273119"/>
    <lineage>
        <taxon>Bacteria</taxon>
        <taxon>Bacillati</taxon>
        <taxon>Mycoplasmatota</taxon>
        <taxon>Mycoplasmoidales</taxon>
        <taxon>Mycoplasmoidaceae</taxon>
        <taxon>Ureaplasma</taxon>
    </lineage>
</organism>